<dbReference type="EMBL" id="CP000503">
    <property type="protein sequence ID" value="ABM22856.1"/>
    <property type="molecule type" value="Genomic_DNA"/>
</dbReference>
<dbReference type="RefSeq" id="WP_011787426.1">
    <property type="nucleotide sequence ID" value="NC_008750.1"/>
</dbReference>
<dbReference type="SMR" id="A1RDX9"/>
<dbReference type="GeneID" id="67441595"/>
<dbReference type="KEGG" id="shw:Sputw3181_0003"/>
<dbReference type="HOGENOM" id="CLU_040267_0_0_6"/>
<dbReference type="Proteomes" id="UP000002597">
    <property type="component" value="Chromosome"/>
</dbReference>
<dbReference type="GO" id="GO:0005737">
    <property type="term" value="C:cytoplasm"/>
    <property type="evidence" value="ECO:0007669"/>
    <property type="project" value="UniProtKB-SubCell"/>
</dbReference>
<dbReference type="GO" id="GO:0005524">
    <property type="term" value="F:ATP binding"/>
    <property type="evidence" value="ECO:0007669"/>
    <property type="project" value="UniProtKB-UniRule"/>
</dbReference>
<dbReference type="GO" id="GO:0003697">
    <property type="term" value="F:single-stranded DNA binding"/>
    <property type="evidence" value="ECO:0007669"/>
    <property type="project" value="UniProtKB-UniRule"/>
</dbReference>
<dbReference type="GO" id="GO:0006260">
    <property type="term" value="P:DNA replication"/>
    <property type="evidence" value="ECO:0007669"/>
    <property type="project" value="UniProtKB-UniRule"/>
</dbReference>
<dbReference type="GO" id="GO:0000731">
    <property type="term" value="P:DNA synthesis involved in DNA repair"/>
    <property type="evidence" value="ECO:0007669"/>
    <property type="project" value="TreeGrafter"/>
</dbReference>
<dbReference type="GO" id="GO:0006302">
    <property type="term" value="P:double-strand break repair"/>
    <property type="evidence" value="ECO:0007669"/>
    <property type="project" value="TreeGrafter"/>
</dbReference>
<dbReference type="GO" id="GO:0009432">
    <property type="term" value="P:SOS response"/>
    <property type="evidence" value="ECO:0007669"/>
    <property type="project" value="UniProtKB-UniRule"/>
</dbReference>
<dbReference type="Gene3D" id="3.40.50.300">
    <property type="entry name" value="P-loop containing nucleotide triphosphate hydrolases"/>
    <property type="match status" value="1"/>
</dbReference>
<dbReference type="Gene3D" id="1.20.1050.90">
    <property type="entry name" value="RecF/RecN/SMC, N-terminal domain"/>
    <property type="match status" value="1"/>
</dbReference>
<dbReference type="HAMAP" id="MF_00365">
    <property type="entry name" value="RecF"/>
    <property type="match status" value="1"/>
</dbReference>
<dbReference type="InterPro" id="IPR001238">
    <property type="entry name" value="DNA-binding_RecF"/>
</dbReference>
<dbReference type="InterPro" id="IPR018078">
    <property type="entry name" value="DNA-binding_RecF_CS"/>
</dbReference>
<dbReference type="InterPro" id="IPR027417">
    <property type="entry name" value="P-loop_NTPase"/>
</dbReference>
<dbReference type="InterPro" id="IPR003395">
    <property type="entry name" value="RecF/RecN/SMC_N"/>
</dbReference>
<dbReference type="InterPro" id="IPR042174">
    <property type="entry name" value="RecF_2"/>
</dbReference>
<dbReference type="NCBIfam" id="TIGR00611">
    <property type="entry name" value="recf"/>
    <property type="match status" value="1"/>
</dbReference>
<dbReference type="PANTHER" id="PTHR32182">
    <property type="entry name" value="DNA REPLICATION AND REPAIR PROTEIN RECF"/>
    <property type="match status" value="1"/>
</dbReference>
<dbReference type="PANTHER" id="PTHR32182:SF0">
    <property type="entry name" value="DNA REPLICATION AND REPAIR PROTEIN RECF"/>
    <property type="match status" value="1"/>
</dbReference>
<dbReference type="Pfam" id="PF02463">
    <property type="entry name" value="SMC_N"/>
    <property type="match status" value="1"/>
</dbReference>
<dbReference type="SUPFAM" id="SSF52540">
    <property type="entry name" value="P-loop containing nucleoside triphosphate hydrolases"/>
    <property type="match status" value="1"/>
</dbReference>
<dbReference type="PROSITE" id="PS00617">
    <property type="entry name" value="RECF_1"/>
    <property type="match status" value="1"/>
</dbReference>
<dbReference type="PROSITE" id="PS00618">
    <property type="entry name" value="RECF_2"/>
    <property type="match status" value="1"/>
</dbReference>
<evidence type="ECO:0000255" key="1">
    <source>
        <dbReference type="HAMAP-Rule" id="MF_00365"/>
    </source>
</evidence>
<accession>A1RDX9</accession>
<feature type="chain" id="PRO_1000048579" description="DNA replication and repair protein RecF">
    <location>
        <begin position="1"/>
        <end position="360"/>
    </location>
</feature>
<feature type="binding site" evidence="1">
    <location>
        <begin position="30"/>
        <end position="37"/>
    </location>
    <ligand>
        <name>ATP</name>
        <dbReference type="ChEBI" id="CHEBI:30616"/>
    </ligand>
</feature>
<organism>
    <name type="scientific">Shewanella sp. (strain W3-18-1)</name>
    <dbReference type="NCBI Taxonomy" id="351745"/>
    <lineage>
        <taxon>Bacteria</taxon>
        <taxon>Pseudomonadati</taxon>
        <taxon>Pseudomonadota</taxon>
        <taxon>Gammaproteobacteria</taxon>
        <taxon>Alteromonadales</taxon>
        <taxon>Shewanellaceae</taxon>
        <taxon>Shewanella</taxon>
    </lineage>
</organism>
<name>RECF_SHESW</name>
<sequence>MSLTRLNIEAFRNIQFAQLIPAPGINVIYGQNGSGKTSILEAIYFLGMGRSFRSHLSQRVINNDNDKLTLFATLNLARGDSKIGLRRFRSGETEVKIDGEKVKRLSTLAETLPIQVITPESFSLLFEGPKSRRQFIDWGAFHADPQFYGAWTNVRRVLKQRNQLLRNGAVYTHIQFWDQEFVRYAEQVTEIRNHYVDSLNGLLKGIIGEFLPSVDVKVSFTRGWDSKTDFAELLENQYSRDLATGHTVSGPHKADLRLRVGNLPAQDALSRGQLKLLVCALRIAQGKLLKQQIDKHSIYLVDDLPSELDAQHRQLLLKQLTDTGAQVFVTAIDPAAIVDSLHTPPNRMFHVEQGRVTVVE</sequence>
<comment type="function">
    <text evidence="1">The RecF protein is involved in DNA metabolism; it is required for DNA replication and normal SOS inducibility. RecF binds preferentially to single-stranded, linear DNA. It also seems to bind ATP.</text>
</comment>
<comment type="subcellular location">
    <subcellularLocation>
        <location evidence="1">Cytoplasm</location>
    </subcellularLocation>
</comment>
<comment type="similarity">
    <text evidence="1">Belongs to the RecF family.</text>
</comment>
<keyword id="KW-0067">ATP-binding</keyword>
<keyword id="KW-0963">Cytoplasm</keyword>
<keyword id="KW-0227">DNA damage</keyword>
<keyword id="KW-0234">DNA repair</keyword>
<keyword id="KW-0235">DNA replication</keyword>
<keyword id="KW-0238">DNA-binding</keyword>
<keyword id="KW-0547">Nucleotide-binding</keyword>
<keyword id="KW-0742">SOS response</keyword>
<gene>
    <name evidence="1" type="primary">recF</name>
    <name type="ordered locus">Sputw3181_0003</name>
</gene>
<protein>
    <recommendedName>
        <fullName evidence="1">DNA replication and repair protein RecF</fullName>
    </recommendedName>
</protein>
<reference key="1">
    <citation type="submission" date="2006-12" db="EMBL/GenBank/DDBJ databases">
        <title>Complete sequence of Shewanella sp. W3-18-1.</title>
        <authorList>
            <consortium name="US DOE Joint Genome Institute"/>
            <person name="Copeland A."/>
            <person name="Lucas S."/>
            <person name="Lapidus A."/>
            <person name="Barry K."/>
            <person name="Detter J.C."/>
            <person name="Glavina del Rio T."/>
            <person name="Hammon N."/>
            <person name="Israni S."/>
            <person name="Dalin E."/>
            <person name="Tice H."/>
            <person name="Pitluck S."/>
            <person name="Chain P."/>
            <person name="Malfatti S."/>
            <person name="Shin M."/>
            <person name="Vergez L."/>
            <person name="Schmutz J."/>
            <person name="Larimer F."/>
            <person name="Land M."/>
            <person name="Hauser L."/>
            <person name="Kyrpides N."/>
            <person name="Lykidis A."/>
            <person name="Tiedje J."/>
            <person name="Richardson P."/>
        </authorList>
    </citation>
    <scope>NUCLEOTIDE SEQUENCE [LARGE SCALE GENOMIC DNA]</scope>
    <source>
        <strain>W3-18-1</strain>
    </source>
</reference>
<proteinExistence type="inferred from homology"/>